<dbReference type="EMBL" id="X13201">
    <property type="protein sequence ID" value="CAA31589.1"/>
    <property type="molecule type" value="Genomic_DNA"/>
</dbReference>
<dbReference type="EMBL" id="X15086">
    <property type="protein sequence ID" value="CAA33194.1"/>
    <property type="molecule type" value="mRNA"/>
</dbReference>
<dbReference type="PIR" id="S04043">
    <property type="entry name" value="S04043"/>
</dbReference>
<dbReference type="RefSeq" id="XP_016672023.1">
    <property type="nucleotide sequence ID" value="XM_016816534.2"/>
</dbReference>
<dbReference type="SMR" id="P13939"/>
<dbReference type="STRING" id="3635.P13939"/>
<dbReference type="PaxDb" id="3635-P13939"/>
<dbReference type="GeneID" id="107891681"/>
<dbReference type="KEGG" id="ghi:107891681"/>
<dbReference type="OMA" id="MGQATKE"/>
<dbReference type="OrthoDB" id="66366at41938"/>
<dbReference type="Proteomes" id="UP000189702">
    <property type="component" value="Chromosome 14"/>
</dbReference>
<dbReference type="GO" id="GO:0005634">
    <property type="term" value="C:nucleus"/>
    <property type="evidence" value="ECO:0000318"/>
    <property type="project" value="GO_Central"/>
</dbReference>
<dbReference type="Gene3D" id="1.20.120.20">
    <property type="entry name" value="Apolipoprotein"/>
    <property type="match status" value="1"/>
</dbReference>
<dbReference type="InterPro" id="IPR039624">
    <property type="entry name" value="LEA1/2/D7/KIN2"/>
</dbReference>
<dbReference type="PANTHER" id="PTHR34191">
    <property type="entry name" value="LATE EMBRYOGENESIS ABUNDANT PROTEIN (LEA) FAMILY PROTEIN"/>
    <property type="match status" value="1"/>
</dbReference>
<dbReference type="PANTHER" id="PTHR34191:SF20">
    <property type="entry name" value="LATE EMBRYOGENESIS ABUNDANT PROTEIN (LEA) FAMILY PROTEIN"/>
    <property type="match status" value="1"/>
</dbReference>
<dbReference type="SUPFAM" id="SSF58113">
    <property type="entry name" value="Apolipoprotein A-I"/>
    <property type="match status" value="1"/>
</dbReference>
<proteinExistence type="evidence at transcript level"/>
<protein>
    <recommendedName>
        <fullName>Late embryogenesis abundant protein D-7</fullName>
        <shortName>LEA D-7</shortName>
    </recommendedName>
</protein>
<accession>P13939</accession>
<evidence type="ECO:0000256" key="1">
    <source>
        <dbReference type="SAM" id="MobiDB-lite"/>
    </source>
</evidence>
<evidence type="ECO:0000305" key="2"/>
<organism>
    <name type="scientific">Gossypium hirsutum</name>
    <name type="common">Upland cotton</name>
    <name type="synonym">Gossypium mexicanum</name>
    <dbReference type="NCBI Taxonomy" id="3635"/>
    <lineage>
        <taxon>Eukaryota</taxon>
        <taxon>Viridiplantae</taxon>
        <taxon>Streptophyta</taxon>
        <taxon>Embryophyta</taxon>
        <taxon>Tracheophyta</taxon>
        <taxon>Spermatophyta</taxon>
        <taxon>Magnoliopsida</taxon>
        <taxon>eudicotyledons</taxon>
        <taxon>Gunneridae</taxon>
        <taxon>Pentapetalae</taxon>
        <taxon>rosids</taxon>
        <taxon>malvids</taxon>
        <taxon>Malvales</taxon>
        <taxon>Malvaceae</taxon>
        <taxon>Malvoideae</taxon>
        <taxon>Gossypium</taxon>
    </lineage>
</organism>
<comment type="function">
    <text>LEA proteins are late embryonic proteins abundant in higher plant seed embryos. There are two subsets of LEA proteins (5a and 5b), the first ones are expressed when the cotyledon weight reach 80 mg and the second set are expressed above 100 mg. The function of those proteins is not known.</text>
</comment>
<comment type="miscellaneous">
    <text>This is a SET 5a protein.</text>
</comment>
<comment type="similarity">
    <text evidence="2">Belongs to the LEA type 4 family.</text>
</comment>
<keyword id="KW-1185">Reference proteome</keyword>
<keyword id="KW-0677">Repeat</keyword>
<name>LEAD7_GOSHI</name>
<feature type="chain" id="PRO_0000221222" description="Late embryogenesis abundant protein D-7">
    <location>
        <begin position="1"/>
        <end position="136"/>
    </location>
</feature>
<feature type="repeat" description="LEA 11-mer repeat">
    <location>
        <begin position="31"/>
        <end position="41"/>
    </location>
</feature>
<feature type="repeat" description="LEA 11-mer repeat">
    <location>
        <begin position="42"/>
        <end position="52"/>
    </location>
</feature>
<feature type="repeat" description="LEA 11-mer repeat">
    <location>
        <begin position="53"/>
        <end position="63"/>
    </location>
</feature>
<feature type="repeat" description="LEA 11-mer repeat">
    <location>
        <begin position="64"/>
        <end position="74"/>
    </location>
</feature>
<feature type="repeat" description="LEA 11-mer repeat">
    <location>
        <begin position="75"/>
        <end position="85"/>
    </location>
</feature>
<feature type="region of interest" description="Disordered" evidence="1">
    <location>
        <begin position="1"/>
        <end position="108"/>
    </location>
</feature>
<feature type="region of interest" description="Disordered" evidence="1">
    <location>
        <begin position="117"/>
        <end position="136"/>
    </location>
</feature>
<feature type="compositionally biased region" description="Basic and acidic residues" evidence="1">
    <location>
        <begin position="11"/>
        <end position="58"/>
    </location>
</feature>
<reference key="1">
    <citation type="journal article" date="1988" name="Plant Mol. Biol.">
        <title>Sequence and characterization of 6 Lea proteins and their genes from cotton.</title>
        <authorList>
            <person name="Baker J."/>
            <person name="Steele C."/>
            <person name="Dure L. III"/>
        </authorList>
        <dbReference type="AGRICOLA" id="IND92000052"/>
    </citation>
    <scope>NUCLEOTIDE SEQUENCE [GENOMIC DNA / MRNA]</scope>
    <source>
        <strain>cv. Coker 201</strain>
        <tissue>Seed</tissue>
    </source>
</reference>
<sequence>MASHEQSYKAGRAEGRAHEKGEQMKESMKEKAEAAKQKTMETAEAAKQKTMETAEAAKQKTRGAAETTNDKTKQTAGAARGKAEETKETSGGILQQAGEKVRNAAQGATDAVKHTFGMADADEDEHNYPATVTRKD</sequence>